<keyword id="KW-0687">Ribonucleoprotein</keyword>
<keyword id="KW-0689">Ribosomal protein</keyword>
<keyword id="KW-0694">RNA-binding</keyword>
<keyword id="KW-0699">rRNA-binding</keyword>
<keyword id="KW-0820">tRNA-binding</keyword>
<evidence type="ECO:0000255" key="1">
    <source>
        <dbReference type="HAMAP-Rule" id="MF_01315"/>
    </source>
</evidence>
<evidence type="ECO:0000256" key="2">
    <source>
        <dbReference type="SAM" id="MobiDB-lite"/>
    </source>
</evidence>
<evidence type="ECO:0000305" key="3"/>
<feature type="chain" id="PRO_0000306596" description="Small ribosomal subunit protein uS13">
    <location>
        <begin position="1"/>
        <end position="122"/>
    </location>
</feature>
<feature type="region of interest" description="Disordered" evidence="2">
    <location>
        <begin position="95"/>
        <end position="122"/>
    </location>
</feature>
<accession>A1VE93</accession>
<gene>
    <name evidence="1" type="primary">rpsM</name>
    <name type="ordered locus">Dvul_1742</name>
</gene>
<sequence length="122" mass="13854">MARIAGVDLPRGKRVDIALTYIYGIGRATALQILDATGVNWTRNVDDLNADEVNEIRKEIEQNHKVEGDLRREISANIKRLMDIGCYRGLRHRRGLPVRGQRTHTNARTRKGPRRGTVGKKK</sequence>
<protein>
    <recommendedName>
        <fullName evidence="1">Small ribosomal subunit protein uS13</fullName>
    </recommendedName>
    <alternativeName>
        <fullName evidence="3">30S ribosomal protein S13</fullName>
    </alternativeName>
</protein>
<dbReference type="EMBL" id="CP000527">
    <property type="protein sequence ID" value="ABM28759.1"/>
    <property type="molecule type" value="Genomic_DNA"/>
</dbReference>
<dbReference type="RefSeq" id="WP_010938621.1">
    <property type="nucleotide sequence ID" value="NC_008751.1"/>
</dbReference>
<dbReference type="SMR" id="A1VE93"/>
<dbReference type="KEGG" id="dvl:Dvul_1742"/>
<dbReference type="HOGENOM" id="CLU_103849_1_2_7"/>
<dbReference type="Proteomes" id="UP000009173">
    <property type="component" value="Chromosome"/>
</dbReference>
<dbReference type="GO" id="GO:0005829">
    <property type="term" value="C:cytosol"/>
    <property type="evidence" value="ECO:0007669"/>
    <property type="project" value="TreeGrafter"/>
</dbReference>
<dbReference type="GO" id="GO:0015935">
    <property type="term" value="C:small ribosomal subunit"/>
    <property type="evidence" value="ECO:0007669"/>
    <property type="project" value="TreeGrafter"/>
</dbReference>
<dbReference type="GO" id="GO:0019843">
    <property type="term" value="F:rRNA binding"/>
    <property type="evidence" value="ECO:0007669"/>
    <property type="project" value="UniProtKB-UniRule"/>
</dbReference>
<dbReference type="GO" id="GO:0003735">
    <property type="term" value="F:structural constituent of ribosome"/>
    <property type="evidence" value="ECO:0007669"/>
    <property type="project" value="InterPro"/>
</dbReference>
<dbReference type="GO" id="GO:0000049">
    <property type="term" value="F:tRNA binding"/>
    <property type="evidence" value="ECO:0007669"/>
    <property type="project" value="UniProtKB-UniRule"/>
</dbReference>
<dbReference type="GO" id="GO:0006412">
    <property type="term" value="P:translation"/>
    <property type="evidence" value="ECO:0007669"/>
    <property type="project" value="UniProtKB-UniRule"/>
</dbReference>
<dbReference type="FunFam" id="1.10.8.50:FF:000001">
    <property type="entry name" value="30S ribosomal protein S13"/>
    <property type="match status" value="1"/>
</dbReference>
<dbReference type="FunFam" id="4.10.910.10:FF:000001">
    <property type="entry name" value="30S ribosomal protein S13"/>
    <property type="match status" value="1"/>
</dbReference>
<dbReference type="Gene3D" id="1.10.8.50">
    <property type="match status" value="1"/>
</dbReference>
<dbReference type="Gene3D" id="4.10.910.10">
    <property type="entry name" value="30s ribosomal protein s13, domain 2"/>
    <property type="match status" value="1"/>
</dbReference>
<dbReference type="HAMAP" id="MF_01315">
    <property type="entry name" value="Ribosomal_uS13"/>
    <property type="match status" value="1"/>
</dbReference>
<dbReference type="InterPro" id="IPR027437">
    <property type="entry name" value="Rbsml_uS13_C"/>
</dbReference>
<dbReference type="InterPro" id="IPR001892">
    <property type="entry name" value="Ribosomal_uS13"/>
</dbReference>
<dbReference type="InterPro" id="IPR010979">
    <property type="entry name" value="Ribosomal_uS13-like_H2TH"/>
</dbReference>
<dbReference type="InterPro" id="IPR019980">
    <property type="entry name" value="Ribosomal_uS13_bac-type"/>
</dbReference>
<dbReference type="InterPro" id="IPR018269">
    <property type="entry name" value="Ribosomal_uS13_CS"/>
</dbReference>
<dbReference type="NCBIfam" id="TIGR03631">
    <property type="entry name" value="uS13_bact"/>
    <property type="match status" value="1"/>
</dbReference>
<dbReference type="PANTHER" id="PTHR10871">
    <property type="entry name" value="30S RIBOSOMAL PROTEIN S13/40S RIBOSOMAL PROTEIN S18"/>
    <property type="match status" value="1"/>
</dbReference>
<dbReference type="PANTHER" id="PTHR10871:SF1">
    <property type="entry name" value="SMALL RIBOSOMAL SUBUNIT PROTEIN US13M"/>
    <property type="match status" value="1"/>
</dbReference>
<dbReference type="Pfam" id="PF00416">
    <property type="entry name" value="Ribosomal_S13"/>
    <property type="match status" value="1"/>
</dbReference>
<dbReference type="PIRSF" id="PIRSF002134">
    <property type="entry name" value="Ribosomal_S13"/>
    <property type="match status" value="1"/>
</dbReference>
<dbReference type="SUPFAM" id="SSF46946">
    <property type="entry name" value="S13-like H2TH domain"/>
    <property type="match status" value="1"/>
</dbReference>
<dbReference type="PROSITE" id="PS00646">
    <property type="entry name" value="RIBOSOMAL_S13_1"/>
    <property type="match status" value="1"/>
</dbReference>
<dbReference type="PROSITE" id="PS50159">
    <property type="entry name" value="RIBOSOMAL_S13_2"/>
    <property type="match status" value="1"/>
</dbReference>
<organism>
    <name type="scientific">Nitratidesulfovibrio vulgaris (strain DP4)</name>
    <name type="common">Desulfovibrio vulgaris</name>
    <dbReference type="NCBI Taxonomy" id="391774"/>
    <lineage>
        <taxon>Bacteria</taxon>
        <taxon>Pseudomonadati</taxon>
        <taxon>Thermodesulfobacteriota</taxon>
        <taxon>Desulfovibrionia</taxon>
        <taxon>Desulfovibrionales</taxon>
        <taxon>Desulfovibrionaceae</taxon>
        <taxon>Nitratidesulfovibrio</taxon>
    </lineage>
</organism>
<proteinExistence type="inferred from homology"/>
<comment type="function">
    <text evidence="1">Located at the top of the head of the 30S subunit, it contacts several helices of the 16S rRNA. In the 70S ribosome it contacts the 23S rRNA (bridge B1a) and protein L5 of the 50S subunit (bridge B1b), connecting the 2 subunits; these bridges are implicated in subunit movement. Contacts the tRNAs in the A and P-sites.</text>
</comment>
<comment type="subunit">
    <text evidence="1">Part of the 30S ribosomal subunit. Forms a loose heterodimer with protein S19. Forms two bridges to the 50S subunit in the 70S ribosome.</text>
</comment>
<comment type="similarity">
    <text evidence="1">Belongs to the universal ribosomal protein uS13 family.</text>
</comment>
<name>RS13_NITV4</name>
<reference key="1">
    <citation type="journal article" date="2009" name="Environ. Microbiol.">
        <title>Contribution of mobile genetic elements to Desulfovibrio vulgaris genome plasticity.</title>
        <authorList>
            <person name="Walker C.B."/>
            <person name="Stolyar S."/>
            <person name="Chivian D."/>
            <person name="Pinel N."/>
            <person name="Gabster J.A."/>
            <person name="Dehal P.S."/>
            <person name="He Z."/>
            <person name="Yang Z.K."/>
            <person name="Yen H.C."/>
            <person name="Zhou J."/>
            <person name="Wall J.D."/>
            <person name="Hazen T.C."/>
            <person name="Arkin A.P."/>
            <person name="Stahl D.A."/>
        </authorList>
    </citation>
    <scope>NUCLEOTIDE SEQUENCE [LARGE SCALE GENOMIC DNA]</scope>
    <source>
        <strain>DP4</strain>
    </source>
</reference>